<sequence length="1141" mass="123714">MNIQERFSLRKSAVGLVSVSLLCAIYTSTVAADTVVTGVNEIIEESQVKDEVSIESEKNESLDGSNIEIVEEIADNIPSPVIAEGEVAVEMKVDRGTENVVSRNDTEVTTSEQNQIEVTETKEILNQTSYQTESGEQRQIIWAHGITPPAMEQSGGFVKEKYGDYLNYTAPFEAGKGYYDTNKSLNASFIDLNLCFAAVSSNMVHWWLEQNSSYVERYLKEKKGTVNVEENYAITDLRRYINSFQNQQNSRVFDMFKTYYGYRTNGFVSDALVDLFINGYKPKAQGGVNLEDSQLVPDSRGGFFYDVFKEKKLTNRIFSGSYERFGEDVRTVLESKGLLGLTYRTLGYATHIVTVWGAEYDNQGKIKAVYITDSDDQQEQIGLKRMGITRDASGNPRLNNHMKNNSAGALLDYVHTIRLGQDLWEEYFNPLAKAKETASQTLADTKKALDLSIQGQSELPESMRLIYLEKLNNLYNQGILSIQKAESSEMLSGALENGLNSLKSLDFPISEVGNALAPDLPVGDRSTVSDVDSLSSQETSSTNLEADTENAGIIADGTNQLHFPVEAQTTSSVEAEGDNVFEQEADTLPIIIENKDEFGSELSRNMQTSETDSLVVAVEEDVKNDEVAQVEELLESEKVENQSSELLSDTLIVESANDKEEDRVEAVVSEQPDSIPHQNVEISLVEPTNVETETVVTPINDAATPHGSPTYIDNSVTESVATPLEKDSIQAGETEIAEPTSSESTNVETETVVTPVNDVATPHGSPTYIDNSVTESVATPLEKDSIQAGETEIAEPTSSESTNVETETVVTPVNDVATPHGSPTYIDNSVTESVATPLEKDSIQAGETEIAEPTSSESTSVEAELVDNSEIHAATSSVTPCGSSAYADGSTTESVATPLEKDSIQTGNTEIAEPTSSKSTNVEAASVDNSEIHADASLTAVSSVNLDNPVIEPVAISLIGSKRDTNAEVEVSSLSKREVRKTNTDGLISVQSKVIKKELLESSLAEAGSPLLEATIAQSSNSNSTEIGMSYQNTVLLESNNTERQVSKAEIVMEHKETELVETVSSASEPVVLVENISQTSNNTIESGKNMGVQSQAGAKQILGVEQSSKVSTPTSRQIMGVGLLTLVLGSALGLLKKRRK</sequence>
<accession>C5W022</accession>
<reference key="1">
    <citation type="journal article" date="2009" name="PLoS ONE">
        <title>Rapid evolution of virulence and drug resistance in the emerging zoonotic pathogen Streptococcus suis.</title>
        <authorList>
            <person name="Holden M.T.G."/>
            <person name="Hauser H."/>
            <person name="Sanders M."/>
            <person name="Ngo T.H."/>
            <person name="Cherevach I."/>
            <person name="Cronin A."/>
            <person name="Goodhead I."/>
            <person name="Mungall K."/>
            <person name="Quail M.A."/>
            <person name="Price C."/>
            <person name="Rabbinowitsch E."/>
            <person name="Sharp S."/>
            <person name="Croucher N.J."/>
            <person name="Chieu T.B."/>
            <person name="Mai N.T.H."/>
            <person name="Diep T.S."/>
            <person name="Chinh N.T."/>
            <person name="Kehoe M."/>
            <person name="Leigh J.A."/>
            <person name="Ward P.N."/>
            <person name="Dowson C.G."/>
            <person name="Whatmore A.M."/>
            <person name="Chanter N."/>
            <person name="Iversen P."/>
            <person name="Gottschalk M."/>
            <person name="Slater J.D."/>
            <person name="Smith H.E."/>
            <person name="Spratt B.G."/>
            <person name="Xu J."/>
            <person name="Ye C."/>
            <person name="Bentley S."/>
            <person name="Barrell B.G."/>
            <person name="Schultsz C."/>
            <person name="Maskell D.J."/>
            <person name="Parkhill J."/>
        </authorList>
    </citation>
    <scope>NUCLEOTIDE SEQUENCE [LARGE SCALE GENOMIC DNA]</scope>
    <source>
        <strain>P1/7</strain>
    </source>
</reference>
<reference key="2">
    <citation type="journal article" date="2013" name="J. Bacteriol.">
        <title>Identification of a novel host-specific IgM protease in Streptococcus suis.</title>
        <authorList>
            <person name="Seele J."/>
            <person name="Singpiel A."/>
            <person name="Spoerry C."/>
            <person name="von Pawel-Rammingen U."/>
            <person name="Valentin-Weigand P."/>
            <person name="Baums C.G."/>
        </authorList>
    </citation>
    <scope>FUNCTION AS IGM PROTEASE</scope>
    <scope>SUBSTRATE SPECIFICITY</scope>
    <scope>ACTIVITY REGULATION</scope>
    <scope>SUBCELLULAR LOCATION</scope>
    <scope>DOMAIN</scope>
    <scope>DISRUPTION PHENOTYPE</scope>
    <source>
        <strain>10 / Serotype 2</strain>
    </source>
</reference>
<name>IGMDE_STRSE</name>
<feature type="signal peptide" evidence="2">
    <location>
        <begin position="1"/>
        <end position="32"/>
    </location>
</feature>
<feature type="chain" id="PRO_5000480020" description="IgM protease">
    <location>
        <begin position="33"/>
        <end position="1141"/>
    </location>
</feature>
<feature type="transmembrane region" description="Helical" evidence="2">
    <location>
        <begin position="1119"/>
        <end position="1136"/>
    </location>
</feature>
<feature type="region of interest" description="Disordered" evidence="3">
    <location>
        <begin position="518"/>
        <end position="544"/>
    </location>
</feature>
<feature type="region of interest" description="Disordered" evidence="3">
    <location>
        <begin position="725"/>
        <end position="749"/>
    </location>
</feature>
<feature type="region of interest" description="Disordered" evidence="3">
    <location>
        <begin position="781"/>
        <end position="805"/>
    </location>
</feature>
<feature type="region of interest" description="Disordered" evidence="3">
    <location>
        <begin position="839"/>
        <end position="860"/>
    </location>
</feature>
<feature type="compositionally biased region" description="Polar residues" evidence="3">
    <location>
        <begin position="526"/>
        <end position="544"/>
    </location>
</feature>
<feature type="compositionally biased region" description="Low complexity" evidence="3">
    <location>
        <begin position="738"/>
        <end position="749"/>
    </location>
</feature>
<feature type="compositionally biased region" description="Low complexity" evidence="3">
    <location>
        <begin position="795"/>
        <end position="805"/>
    </location>
</feature>
<feature type="active site" description="Nucleophile" evidence="1">
    <location>
        <position position="195"/>
    </location>
</feature>
<keyword id="KW-1003">Cell membrane</keyword>
<keyword id="KW-0378">Hydrolase</keyword>
<keyword id="KW-0472">Membrane</keyword>
<keyword id="KW-0645">Protease</keyword>
<keyword id="KW-0964">Secreted</keyword>
<keyword id="KW-0732">Signal</keyword>
<keyword id="KW-0788">Thiol protease</keyword>
<keyword id="KW-0812">Transmembrane</keyword>
<keyword id="KW-1133">Transmembrane helix</keyword>
<keyword id="KW-0843">Virulence</keyword>
<gene>
    <name type="primary">ide</name>
    <name type="ordered locus">SSU0496</name>
</gene>
<organism>
    <name type="scientific">Streptococcus suis (strain P1/7)</name>
    <dbReference type="NCBI Taxonomy" id="218494"/>
    <lineage>
        <taxon>Bacteria</taxon>
        <taxon>Bacillati</taxon>
        <taxon>Bacillota</taxon>
        <taxon>Bacilli</taxon>
        <taxon>Lactobacillales</taxon>
        <taxon>Streptococcaceae</taxon>
        <taxon>Streptococcus</taxon>
    </lineage>
</organism>
<proteinExistence type="evidence at protein level"/>
<protein>
    <recommendedName>
        <fullName>IgM protease</fullName>
        <ecNumber>3.4.22.-</ecNumber>
    </recommendedName>
    <alternativeName>
        <fullName>Immunoglobulin M-degrading enzyme of S.suis</fullName>
        <shortName>IdeSsuis</shortName>
    </alternativeName>
</protein>
<dbReference type="EC" id="3.4.22.-"/>
<dbReference type="EMBL" id="AM946016">
    <property type="protein sequence ID" value="CAR45112.1"/>
    <property type="molecule type" value="Genomic_DNA"/>
</dbReference>
<dbReference type="SMR" id="C5W022"/>
<dbReference type="MEROPS" id="C66.003"/>
<dbReference type="KEGG" id="ssi:SSU0496"/>
<dbReference type="HOGENOM" id="CLU_294903_0_0_9"/>
<dbReference type="PHI-base" id="PHI:8280"/>
<dbReference type="GO" id="GO:0005576">
    <property type="term" value="C:extracellular region"/>
    <property type="evidence" value="ECO:0007669"/>
    <property type="project" value="UniProtKB-SubCell"/>
</dbReference>
<dbReference type="GO" id="GO:0005886">
    <property type="term" value="C:plasma membrane"/>
    <property type="evidence" value="ECO:0007669"/>
    <property type="project" value="UniProtKB-SubCell"/>
</dbReference>
<dbReference type="GO" id="GO:0008234">
    <property type="term" value="F:cysteine-type peptidase activity"/>
    <property type="evidence" value="ECO:0007669"/>
    <property type="project" value="UniProtKB-KW"/>
</dbReference>
<dbReference type="GO" id="GO:0006508">
    <property type="term" value="P:proteolysis"/>
    <property type="evidence" value="ECO:0007669"/>
    <property type="project" value="UniProtKB-KW"/>
</dbReference>
<dbReference type="Gene3D" id="3.90.70.10">
    <property type="entry name" value="Cysteine proteinases"/>
    <property type="match status" value="1"/>
</dbReference>
<dbReference type="InterPro" id="IPR015117">
    <property type="entry name" value="IdeS"/>
</dbReference>
<dbReference type="InterPro" id="IPR038765">
    <property type="entry name" value="Papain-like_cys_pep_sf"/>
</dbReference>
<dbReference type="InterPro" id="IPR005877">
    <property type="entry name" value="YSIRK_signal_dom"/>
</dbReference>
<dbReference type="NCBIfam" id="TIGR01168">
    <property type="entry name" value="YSIRK_signal"/>
    <property type="match status" value="1"/>
</dbReference>
<dbReference type="Pfam" id="PF09028">
    <property type="entry name" value="Mac-1"/>
    <property type="match status" value="1"/>
</dbReference>
<dbReference type="SUPFAM" id="SSF54001">
    <property type="entry name" value="Cysteine proteinases"/>
    <property type="match status" value="1"/>
</dbReference>
<comment type="function">
    <text evidence="4">Catalyzes the specific cleavage of porcine IgM bound to the bacterial surface. Can degrade only IgM but neither IgG nor IgA, and is host specific, as it exclusively cleaves porcine IgM but not IgM from six other species, including human, mouse and a closely related member of the Suidae family. Promotes survival in porcine blood. Is thus involved in a so-far-unknown mechanism of host-pathogen interaction at an early stage of the host immune response.</text>
</comment>
<comment type="activity regulation">
    <text evidence="4">IgM cleavage is inhibited by iodoacetamide but not by AEBSF, bestatin, E-64, Z-LVG-CHN(2), or EDTA.</text>
</comment>
<comment type="subcellular location">
    <subcellularLocation>
        <location evidence="4">Cell membrane</location>
        <topology evidence="4">Single-pass membrane protein</topology>
    </subcellularLocation>
    <subcellularLocation>
        <location evidence="4">Secreted</location>
    </subcellularLocation>
    <text>Is released into the extracellular space and remains at least transiently attached to the bacterial surface, likely via its C-terminal transmembrane domain.</text>
</comment>
<comment type="domain">
    <text evidence="4">Domain encompassing residues 35-432 are sufficient for IgM cleavage.</text>
</comment>
<comment type="disruption phenotype">
    <text evidence="4">Cells lacking this gene lose IgM-cleaving activity and show an increase of surface-bound IgM antigen. They are also significantly attenuated in survival in blood of a piglet vaccinated once with a bacterin, in comparison to the wild-type.</text>
</comment>
<comment type="similarity">
    <text evidence="5">Belongs to the peptidase C66 family.</text>
</comment>
<evidence type="ECO:0000250" key="1"/>
<evidence type="ECO:0000255" key="2"/>
<evidence type="ECO:0000256" key="3">
    <source>
        <dbReference type="SAM" id="MobiDB-lite"/>
    </source>
</evidence>
<evidence type="ECO:0000269" key="4">
    <source>
    </source>
</evidence>
<evidence type="ECO:0000305" key="5"/>